<gene>
    <name evidence="1" type="primary">hslO</name>
    <name type="ordered locus">plu0099</name>
</gene>
<name>HSLO_PHOLL</name>
<proteinExistence type="inferred from homology"/>
<comment type="function">
    <text evidence="1">Redox regulated molecular chaperone. Protects both thermally unfolding and oxidatively damaged proteins from irreversible aggregation. Plays an important role in the bacterial defense system toward oxidative stress.</text>
</comment>
<comment type="subcellular location">
    <subcellularLocation>
        <location evidence="1">Cytoplasm</location>
    </subcellularLocation>
</comment>
<comment type="PTM">
    <text evidence="1">Under oxidizing conditions two disulfide bonds are formed involving the reactive cysteines. Under reducing conditions zinc is bound to the reactive cysteines and the protein is inactive.</text>
</comment>
<comment type="similarity">
    <text evidence="1">Belongs to the HSP33 family.</text>
</comment>
<protein>
    <recommendedName>
        <fullName evidence="1">33 kDa chaperonin</fullName>
    </recommendedName>
    <alternativeName>
        <fullName evidence="1">Heat shock protein 33 homolog</fullName>
        <shortName evidence="1">HSP33</shortName>
    </alternativeName>
</protein>
<keyword id="KW-0143">Chaperone</keyword>
<keyword id="KW-0963">Cytoplasm</keyword>
<keyword id="KW-1015">Disulfide bond</keyword>
<keyword id="KW-0676">Redox-active center</keyword>
<keyword id="KW-1185">Reference proteome</keyword>
<keyword id="KW-0862">Zinc</keyword>
<organism>
    <name type="scientific">Photorhabdus laumondii subsp. laumondii (strain DSM 15139 / CIP 105565 / TT01)</name>
    <name type="common">Photorhabdus luminescens subsp. laumondii</name>
    <dbReference type="NCBI Taxonomy" id="243265"/>
    <lineage>
        <taxon>Bacteria</taxon>
        <taxon>Pseudomonadati</taxon>
        <taxon>Pseudomonadota</taxon>
        <taxon>Gammaproteobacteria</taxon>
        <taxon>Enterobacterales</taxon>
        <taxon>Morganellaceae</taxon>
        <taxon>Photorhabdus</taxon>
    </lineage>
</organism>
<reference key="1">
    <citation type="journal article" date="2003" name="Nat. Biotechnol.">
        <title>The genome sequence of the entomopathogenic bacterium Photorhabdus luminescens.</title>
        <authorList>
            <person name="Duchaud E."/>
            <person name="Rusniok C."/>
            <person name="Frangeul L."/>
            <person name="Buchrieser C."/>
            <person name="Givaudan A."/>
            <person name="Taourit S."/>
            <person name="Bocs S."/>
            <person name="Boursaux-Eude C."/>
            <person name="Chandler M."/>
            <person name="Charles J.-F."/>
            <person name="Dassa E."/>
            <person name="Derose R."/>
            <person name="Derzelle S."/>
            <person name="Freyssinet G."/>
            <person name="Gaudriault S."/>
            <person name="Medigue C."/>
            <person name="Lanois A."/>
            <person name="Powell K."/>
            <person name="Siguier P."/>
            <person name="Vincent R."/>
            <person name="Wingate V."/>
            <person name="Zouine M."/>
            <person name="Glaser P."/>
            <person name="Boemare N."/>
            <person name="Danchin A."/>
            <person name="Kunst F."/>
        </authorList>
    </citation>
    <scope>NUCLEOTIDE SEQUENCE [LARGE SCALE GENOMIC DNA]</scope>
    <source>
        <strain>DSM 15139 / CIP 105565 / TT01</strain>
    </source>
</reference>
<sequence length="290" mass="32606">MFKQDQLHRFLFKNYSVRGELVLASETYQHILENHDYPQPVQQLLGELLVATSLLTATLKFDGDITVQIQGDGPVKLAVINGNHQQQMRGVARIDGLVAENSSLKQMVGTGYMVITITPTHGERYQGVVALEGETLADCLDDYFRQSEQLPTRLFIRTGIQDGRVAAGGMLLQILPTAEQGSAEAFDHLVQLTATIKGEELFSLEVKEILHRLYHEEDVILYEPQAVEFRCTCSRQRCADTLVTLSDEDVNHILQKDGNIDMACEYCGTHYIFDADDLAAIRIEKKNRLH</sequence>
<dbReference type="EMBL" id="BX571859">
    <property type="protein sequence ID" value="CAE12394.1"/>
    <property type="molecule type" value="Genomic_DNA"/>
</dbReference>
<dbReference type="RefSeq" id="WP_011144505.1">
    <property type="nucleotide sequence ID" value="NC_005126.1"/>
</dbReference>
<dbReference type="SMR" id="Q7NA46"/>
<dbReference type="STRING" id="243265.plu0099"/>
<dbReference type="GeneID" id="48846400"/>
<dbReference type="KEGG" id="plu:plu0099"/>
<dbReference type="eggNOG" id="COG1281">
    <property type="taxonomic scope" value="Bacteria"/>
</dbReference>
<dbReference type="HOGENOM" id="CLU_054493_0_0_6"/>
<dbReference type="OrthoDB" id="9793753at2"/>
<dbReference type="Proteomes" id="UP000002514">
    <property type="component" value="Chromosome"/>
</dbReference>
<dbReference type="GO" id="GO:0005737">
    <property type="term" value="C:cytoplasm"/>
    <property type="evidence" value="ECO:0007669"/>
    <property type="project" value="UniProtKB-SubCell"/>
</dbReference>
<dbReference type="GO" id="GO:0044183">
    <property type="term" value="F:protein folding chaperone"/>
    <property type="evidence" value="ECO:0007669"/>
    <property type="project" value="TreeGrafter"/>
</dbReference>
<dbReference type="GO" id="GO:0051082">
    <property type="term" value="F:unfolded protein binding"/>
    <property type="evidence" value="ECO:0007669"/>
    <property type="project" value="UniProtKB-UniRule"/>
</dbReference>
<dbReference type="GO" id="GO:0042026">
    <property type="term" value="P:protein refolding"/>
    <property type="evidence" value="ECO:0007669"/>
    <property type="project" value="TreeGrafter"/>
</dbReference>
<dbReference type="CDD" id="cd00498">
    <property type="entry name" value="Hsp33"/>
    <property type="match status" value="1"/>
</dbReference>
<dbReference type="Gene3D" id="1.10.287.480">
    <property type="entry name" value="helix hairpin bin"/>
    <property type="match status" value="1"/>
</dbReference>
<dbReference type="Gene3D" id="3.55.30.10">
    <property type="entry name" value="Hsp33 domain"/>
    <property type="match status" value="1"/>
</dbReference>
<dbReference type="Gene3D" id="3.90.1280.10">
    <property type="entry name" value="HSP33 redox switch-like"/>
    <property type="match status" value="1"/>
</dbReference>
<dbReference type="HAMAP" id="MF_00117">
    <property type="entry name" value="HslO"/>
    <property type="match status" value="1"/>
</dbReference>
<dbReference type="InterPro" id="IPR000397">
    <property type="entry name" value="Heat_shock_Hsp33"/>
</dbReference>
<dbReference type="InterPro" id="IPR016154">
    <property type="entry name" value="Heat_shock_Hsp33_C"/>
</dbReference>
<dbReference type="InterPro" id="IPR016153">
    <property type="entry name" value="Heat_shock_Hsp33_N"/>
</dbReference>
<dbReference type="InterPro" id="IPR023212">
    <property type="entry name" value="Hsp33_helix_hairpin_bin_dom_sf"/>
</dbReference>
<dbReference type="NCBIfam" id="NF001033">
    <property type="entry name" value="PRK00114.1"/>
    <property type="match status" value="1"/>
</dbReference>
<dbReference type="PANTHER" id="PTHR30111">
    <property type="entry name" value="33 KDA CHAPERONIN"/>
    <property type="match status" value="1"/>
</dbReference>
<dbReference type="PANTHER" id="PTHR30111:SF1">
    <property type="entry name" value="33 KDA CHAPERONIN"/>
    <property type="match status" value="1"/>
</dbReference>
<dbReference type="Pfam" id="PF01430">
    <property type="entry name" value="HSP33"/>
    <property type="match status" value="1"/>
</dbReference>
<dbReference type="PIRSF" id="PIRSF005261">
    <property type="entry name" value="Heat_shock_Hsp33"/>
    <property type="match status" value="1"/>
</dbReference>
<dbReference type="SUPFAM" id="SSF64397">
    <property type="entry name" value="Hsp33 domain"/>
    <property type="match status" value="1"/>
</dbReference>
<dbReference type="SUPFAM" id="SSF118352">
    <property type="entry name" value="HSP33 redox switch-like"/>
    <property type="match status" value="1"/>
</dbReference>
<feature type="chain" id="PRO_0000192190" description="33 kDa chaperonin">
    <location>
        <begin position="1"/>
        <end position="290"/>
    </location>
</feature>
<feature type="disulfide bond" description="Redox-active" evidence="1">
    <location>
        <begin position="231"/>
        <end position="233"/>
    </location>
</feature>
<feature type="disulfide bond" description="Redox-active" evidence="1">
    <location>
        <begin position="264"/>
        <end position="267"/>
    </location>
</feature>
<evidence type="ECO:0000255" key="1">
    <source>
        <dbReference type="HAMAP-Rule" id="MF_00117"/>
    </source>
</evidence>
<accession>Q7NA46</accession>